<evidence type="ECO:0000255" key="1">
    <source>
        <dbReference type="HAMAP-Rule" id="MF_01400"/>
    </source>
</evidence>
<evidence type="ECO:0000255" key="2">
    <source>
        <dbReference type="PROSITE-ProRule" id="PRU01126"/>
    </source>
</evidence>
<reference key="1">
    <citation type="journal article" date="2005" name="Nucleic Acids Res.">
        <title>Genome dynamics and diversity of Shigella species, the etiologic agents of bacillary dysentery.</title>
        <authorList>
            <person name="Yang F."/>
            <person name="Yang J."/>
            <person name="Zhang X."/>
            <person name="Chen L."/>
            <person name="Jiang Y."/>
            <person name="Yan Y."/>
            <person name="Tang X."/>
            <person name="Wang J."/>
            <person name="Xiong Z."/>
            <person name="Dong J."/>
            <person name="Xue Y."/>
            <person name="Zhu Y."/>
            <person name="Xu X."/>
            <person name="Sun L."/>
            <person name="Chen S."/>
            <person name="Nie H."/>
            <person name="Peng J."/>
            <person name="Xu J."/>
            <person name="Wang Y."/>
            <person name="Yuan Z."/>
            <person name="Wen Y."/>
            <person name="Yao Z."/>
            <person name="Shen Y."/>
            <person name="Qiang B."/>
            <person name="Hou Y."/>
            <person name="Yu J."/>
            <person name="Jin Q."/>
        </authorList>
    </citation>
    <scope>NUCLEOTIDE SEQUENCE [LARGE SCALE GENOMIC DNA]</scope>
    <source>
        <strain>Ss046</strain>
    </source>
</reference>
<comment type="catalytic activity">
    <reaction evidence="1">
        <text>L-methionyl-[protein] + [thioredoxin]-disulfide + H2O = L-methionyl-(R)-S-oxide-[protein] + [thioredoxin]-dithiol</text>
        <dbReference type="Rhea" id="RHEA:24164"/>
        <dbReference type="Rhea" id="RHEA-COMP:10698"/>
        <dbReference type="Rhea" id="RHEA-COMP:10700"/>
        <dbReference type="Rhea" id="RHEA-COMP:12313"/>
        <dbReference type="Rhea" id="RHEA-COMP:12314"/>
        <dbReference type="ChEBI" id="CHEBI:15377"/>
        <dbReference type="ChEBI" id="CHEBI:16044"/>
        <dbReference type="ChEBI" id="CHEBI:29950"/>
        <dbReference type="ChEBI" id="CHEBI:45764"/>
        <dbReference type="ChEBI" id="CHEBI:50058"/>
        <dbReference type="EC" id="1.8.4.12"/>
    </reaction>
</comment>
<comment type="cofactor">
    <cofactor evidence="1">
        <name>Zn(2+)</name>
        <dbReference type="ChEBI" id="CHEBI:29105"/>
    </cofactor>
    <text evidence="1">Binds 1 zinc ion per subunit. The zinc ion is important for the structural integrity of the protein.</text>
</comment>
<comment type="similarity">
    <text evidence="1">Belongs to the MsrB Met sulfoxide reductase family.</text>
</comment>
<sequence length="137" mass="15451">MANKPSAEELKKNLSEMQFYVTQNHGTEPPFTGRLLHNKRDGVYHCLICDAPLFHSQTKYDSGCGWPSFYEPVSEESIRYIKDLSHGMQRIEIRCGNCDAHLGHVFPDGPQPTGERYCVNSASLRFTDGENGEEING</sequence>
<dbReference type="EC" id="1.8.4.12" evidence="1"/>
<dbReference type="EMBL" id="CP000038">
    <property type="protein sequence ID" value="AAZ88096.1"/>
    <property type="molecule type" value="Genomic_DNA"/>
</dbReference>
<dbReference type="RefSeq" id="WP_001284618.1">
    <property type="nucleotide sequence ID" value="NC_007384.1"/>
</dbReference>
<dbReference type="SMR" id="Q3Z2B6"/>
<dbReference type="GeneID" id="93775987"/>
<dbReference type="KEGG" id="ssn:SSON_1385"/>
<dbReference type="HOGENOM" id="CLU_031040_8_5_6"/>
<dbReference type="Proteomes" id="UP000002529">
    <property type="component" value="Chromosome"/>
</dbReference>
<dbReference type="GO" id="GO:0005737">
    <property type="term" value="C:cytoplasm"/>
    <property type="evidence" value="ECO:0007669"/>
    <property type="project" value="TreeGrafter"/>
</dbReference>
<dbReference type="GO" id="GO:0033743">
    <property type="term" value="F:peptide-methionine (R)-S-oxide reductase activity"/>
    <property type="evidence" value="ECO:0007669"/>
    <property type="project" value="UniProtKB-UniRule"/>
</dbReference>
<dbReference type="GO" id="GO:0008270">
    <property type="term" value="F:zinc ion binding"/>
    <property type="evidence" value="ECO:0007669"/>
    <property type="project" value="UniProtKB-UniRule"/>
</dbReference>
<dbReference type="GO" id="GO:0030091">
    <property type="term" value="P:protein repair"/>
    <property type="evidence" value="ECO:0007669"/>
    <property type="project" value="InterPro"/>
</dbReference>
<dbReference type="GO" id="GO:0006979">
    <property type="term" value="P:response to oxidative stress"/>
    <property type="evidence" value="ECO:0007669"/>
    <property type="project" value="InterPro"/>
</dbReference>
<dbReference type="FunFam" id="2.170.150.20:FF:000001">
    <property type="entry name" value="Peptide methionine sulfoxide reductase MsrB"/>
    <property type="match status" value="1"/>
</dbReference>
<dbReference type="Gene3D" id="2.170.150.20">
    <property type="entry name" value="Peptide methionine sulfoxide reductase"/>
    <property type="match status" value="1"/>
</dbReference>
<dbReference type="HAMAP" id="MF_01400">
    <property type="entry name" value="MsrB"/>
    <property type="match status" value="1"/>
</dbReference>
<dbReference type="InterPro" id="IPR028427">
    <property type="entry name" value="Met_Sox_Rdtase_MsrB"/>
</dbReference>
<dbReference type="InterPro" id="IPR002579">
    <property type="entry name" value="Met_Sox_Rdtase_MsrB_dom"/>
</dbReference>
<dbReference type="InterPro" id="IPR011057">
    <property type="entry name" value="Mss4-like_sf"/>
</dbReference>
<dbReference type="NCBIfam" id="TIGR00357">
    <property type="entry name" value="peptide-methionine (R)-S-oxide reductase MsrB"/>
    <property type="match status" value="1"/>
</dbReference>
<dbReference type="PANTHER" id="PTHR10173">
    <property type="entry name" value="METHIONINE SULFOXIDE REDUCTASE"/>
    <property type="match status" value="1"/>
</dbReference>
<dbReference type="PANTHER" id="PTHR10173:SF52">
    <property type="entry name" value="METHIONINE-R-SULFOXIDE REDUCTASE B1"/>
    <property type="match status" value="1"/>
</dbReference>
<dbReference type="Pfam" id="PF01641">
    <property type="entry name" value="SelR"/>
    <property type="match status" value="1"/>
</dbReference>
<dbReference type="SUPFAM" id="SSF51316">
    <property type="entry name" value="Mss4-like"/>
    <property type="match status" value="1"/>
</dbReference>
<dbReference type="PROSITE" id="PS51790">
    <property type="entry name" value="MSRB"/>
    <property type="match status" value="1"/>
</dbReference>
<organism>
    <name type="scientific">Shigella sonnei (strain Ss046)</name>
    <dbReference type="NCBI Taxonomy" id="300269"/>
    <lineage>
        <taxon>Bacteria</taxon>
        <taxon>Pseudomonadati</taxon>
        <taxon>Pseudomonadota</taxon>
        <taxon>Gammaproteobacteria</taxon>
        <taxon>Enterobacterales</taxon>
        <taxon>Enterobacteriaceae</taxon>
        <taxon>Shigella</taxon>
    </lineage>
</organism>
<accession>Q3Z2B6</accession>
<name>MSRB_SHISS</name>
<keyword id="KW-0479">Metal-binding</keyword>
<keyword id="KW-0560">Oxidoreductase</keyword>
<keyword id="KW-1185">Reference proteome</keyword>
<keyword id="KW-0862">Zinc</keyword>
<feature type="chain" id="PRO_1000068294" description="Peptide methionine sulfoxide reductase MsrB">
    <location>
        <begin position="1"/>
        <end position="137"/>
    </location>
</feature>
<feature type="domain" description="MsrB" evidence="2">
    <location>
        <begin position="7"/>
        <end position="129"/>
    </location>
</feature>
<feature type="active site" description="Nucleophile" evidence="2">
    <location>
        <position position="118"/>
    </location>
</feature>
<feature type="binding site" evidence="2">
    <location>
        <position position="46"/>
    </location>
    <ligand>
        <name>Zn(2+)</name>
        <dbReference type="ChEBI" id="CHEBI:29105"/>
    </ligand>
</feature>
<feature type="binding site" evidence="2">
    <location>
        <position position="49"/>
    </location>
    <ligand>
        <name>Zn(2+)</name>
        <dbReference type="ChEBI" id="CHEBI:29105"/>
    </ligand>
</feature>
<feature type="binding site" evidence="2">
    <location>
        <position position="95"/>
    </location>
    <ligand>
        <name>Zn(2+)</name>
        <dbReference type="ChEBI" id="CHEBI:29105"/>
    </ligand>
</feature>
<feature type="binding site" evidence="2">
    <location>
        <position position="98"/>
    </location>
    <ligand>
        <name>Zn(2+)</name>
        <dbReference type="ChEBI" id="CHEBI:29105"/>
    </ligand>
</feature>
<proteinExistence type="inferred from homology"/>
<protein>
    <recommendedName>
        <fullName evidence="1">Peptide methionine sulfoxide reductase MsrB</fullName>
        <ecNumber evidence="1">1.8.4.12</ecNumber>
    </recommendedName>
    <alternativeName>
        <fullName evidence="1">Peptide-methionine (R)-S-oxide reductase</fullName>
    </alternativeName>
</protein>
<gene>
    <name evidence="1" type="primary">msrB</name>
    <name type="ordered locus">SSON_1385</name>
</gene>